<gene>
    <name type="primary">cbaA</name>
</gene>
<evidence type="ECO:0000250" key="1"/>
<evidence type="ECO:0000255" key="2"/>
<evidence type="ECO:0000305" key="3"/>
<evidence type="ECO:0007829" key="4">
    <source>
        <dbReference type="PDB" id="1XME"/>
    </source>
</evidence>
<protein>
    <recommendedName>
        <fullName>Cytochrome c oxidase subunit 1</fullName>
        <ecNumber>7.1.1.9</ecNumber>
    </recommendedName>
    <alternativeName>
        <fullName>Cytochrome c ba(3) subunit I</fullName>
    </alternativeName>
    <alternativeName>
        <fullName>Cytochrome c oxidase polypeptide I</fullName>
    </alternativeName>
    <alternativeName>
        <fullName>Cytochrome cba3 subunit 1</fullName>
    </alternativeName>
</protein>
<sequence>IRALPWDNPAFVAPVLGLLGFIPGGAGGIVNASFTLDYVVHNTAWVPGHFHLQVASLVTLTAMGSLYWLLPNLTGKPISDAQRRLGLAVVWLWFLGMMIMAVGLHWAG</sequence>
<keyword id="KW-0002">3D-structure</keyword>
<keyword id="KW-1003">Cell membrane</keyword>
<keyword id="KW-0186">Copper</keyword>
<keyword id="KW-0249">Electron transport</keyword>
<keyword id="KW-0349">Heme</keyword>
<keyword id="KW-0375">Hydrogen ion transport</keyword>
<keyword id="KW-0406">Ion transport</keyword>
<keyword id="KW-0408">Iron</keyword>
<keyword id="KW-0472">Membrane</keyword>
<keyword id="KW-0479">Metal-binding</keyword>
<keyword id="KW-0679">Respiratory chain</keyword>
<keyword id="KW-1278">Translocase</keyword>
<keyword id="KW-0812">Transmembrane</keyword>
<keyword id="KW-1133">Transmembrane helix</keyword>
<keyword id="KW-0813">Transport</keyword>
<comment type="catalytic activity">
    <reaction>
        <text>4 Fe(II)-[cytochrome c] + O2 + 8 H(+)(in) = 4 Fe(III)-[cytochrome c] + 2 H2O + 4 H(+)(out)</text>
        <dbReference type="Rhea" id="RHEA:11436"/>
        <dbReference type="Rhea" id="RHEA-COMP:10350"/>
        <dbReference type="Rhea" id="RHEA-COMP:14399"/>
        <dbReference type="ChEBI" id="CHEBI:15377"/>
        <dbReference type="ChEBI" id="CHEBI:15378"/>
        <dbReference type="ChEBI" id="CHEBI:15379"/>
        <dbReference type="ChEBI" id="CHEBI:29033"/>
        <dbReference type="ChEBI" id="CHEBI:29034"/>
        <dbReference type="EC" id="7.1.1.9"/>
    </reaction>
</comment>
<comment type="cofactor">
    <cofactor evidence="1">
        <name>heme</name>
        <dbReference type="ChEBI" id="CHEBI:30413"/>
    </cofactor>
    <text evidence="1">Binds 2 heme groups.</text>
</comment>
<comment type="cofactor">
    <cofactor evidence="1">
        <name>Cu cation</name>
        <dbReference type="ChEBI" id="CHEBI:23378"/>
    </cofactor>
    <text evidence="1">Binds a copper B center.</text>
</comment>
<comment type="pathway">
    <text>Energy metabolism; oxidative phosphorylation.</text>
</comment>
<comment type="subcellular location">
    <subcellularLocation>
        <location evidence="1">Cell membrane</location>
        <topology evidence="1">Multi-pass membrane protein</topology>
    </subcellularLocation>
</comment>
<comment type="similarity">
    <text evidence="3">Belongs to the heme-copper respiratory oxidase family.</text>
</comment>
<dbReference type="EC" id="7.1.1.9"/>
<dbReference type="EMBL" id="Z84206">
    <property type="protein sequence ID" value="CAB06339.1"/>
    <property type="molecule type" value="Genomic_DNA"/>
</dbReference>
<dbReference type="PIR" id="T52481">
    <property type="entry name" value="T52481"/>
</dbReference>
<dbReference type="PDB" id="1XME">
    <property type="method" value="X-ray"/>
    <property type="resolution" value="2.30 A"/>
    <property type="chains" value="A=1-108"/>
</dbReference>
<dbReference type="PDBsum" id="1XME"/>
<dbReference type="SMR" id="Q56408"/>
<dbReference type="IntAct" id="Q56408">
    <property type="interactions" value="2"/>
</dbReference>
<dbReference type="DrugBank" id="DB02451">
    <property type="generic name" value="B-nonylglucoside"/>
</dbReference>
<dbReference type="UniPathway" id="UPA00705"/>
<dbReference type="GO" id="GO:0005886">
    <property type="term" value="C:plasma membrane"/>
    <property type="evidence" value="ECO:0007669"/>
    <property type="project" value="UniProtKB-SubCell"/>
</dbReference>
<dbReference type="GO" id="GO:0004129">
    <property type="term" value="F:cytochrome-c oxidase activity"/>
    <property type="evidence" value="ECO:0007669"/>
    <property type="project" value="UniProtKB-EC"/>
</dbReference>
<dbReference type="GO" id="GO:0020037">
    <property type="term" value="F:heme binding"/>
    <property type="evidence" value="ECO:0007669"/>
    <property type="project" value="InterPro"/>
</dbReference>
<dbReference type="GO" id="GO:0046872">
    <property type="term" value="F:metal ion binding"/>
    <property type="evidence" value="ECO:0007669"/>
    <property type="project" value="UniProtKB-KW"/>
</dbReference>
<dbReference type="GO" id="GO:0006119">
    <property type="term" value="P:oxidative phosphorylation"/>
    <property type="evidence" value="ECO:0007669"/>
    <property type="project" value="UniProtKB-UniPathway"/>
</dbReference>
<dbReference type="Gene3D" id="1.20.210.10">
    <property type="entry name" value="Cytochrome c oxidase-like, subunit I domain"/>
    <property type="match status" value="1"/>
</dbReference>
<dbReference type="InterPro" id="IPR023616">
    <property type="entry name" value="Cyt_c_oxase-like_su1_dom"/>
</dbReference>
<dbReference type="InterPro" id="IPR036927">
    <property type="entry name" value="Cyt_c_oxase-like_su1_sf"/>
</dbReference>
<dbReference type="InterPro" id="IPR000883">
    <property type="entry name" value="Cyt_C_Oxase_1"/>
</dbReference>
<dbReference type="PANTHER" id="PTHR10422">
    <property type="entry name" value="CYTOCHROME C OXIDASE SUBUNIT 1"/>
    <property type="match status" value="1"/>
</dbReference>
<dbReference type="PANTHER" id="PTHR10422:SF40">
    <property type="entry name" value="CYTOCHROME C OXIDASE SUBUNIT I"/>
    <property type="match status" value="1"/>
</dbReference>
<dbReference type="Pfam" id="PF00115">
    <property type="entry name" value="COX1"/>
    <property type="match status" value="1"/>
</dbReference>
<dbReference type="SUPFAM" id="SSF81442">
    <property type="entry name" value="Cytochrome c oxidase subunit I-like"/>
    <property type="match status" value="1"/>
</dbReference>
<dbReference type="PROSITE" id="PS50855">
    <property type="entry name" value="COX1"/>
    <property type="match status" value="1"/>
</dbReference>
<reference key="1">
    <citation type="journal article" date="1997" name="Eur. J. Biochem.">
        <title>Ribosomal protein S15 from Thermus thermophilus -- cloning, sequencing, overexpression of the gene and RNA-binding properties of the protein.</title>
        <authorList>
            <person name="Serganov A."/>
            <person name="Rak A."/>
            <person name="Garber M.B."/>
            <person name="Reinbolt J."/>
            <person name="Ehresmann B."/>
            <person name="Ehresmann C."/>
            <person name="Grunberg-Manago M."/>
            <person name="Portier C."/>
        </authorList>
    </citation>
    <scope>NUCLEOTIDE SEQUENCE [GENOMIC DNA]</scope>
    <source>
        <strain>VK1</strain>
    </source>
</reference>
<name>COX1_THETH</name>
<proteinExistence type="evidence at protein level"/>
<accession>Q56408</accession>
<feature type="chain" id="PRO_0000183463" description="Cytochrome c oxidase subunit 1">
    <location>
        <begin position="1" status="less than"/>
        <end position="108" status="greater than"/>
    </location>
</feature>
<feature type="transmembrane region" description="Helical" evidence="2">
    <location>
        <begin position="10"/>
        <end position="30"/>
    </location>
</feature>
<feature type="transmembrane region" description="Helical" evidence="2">
    <location>
        <begin position="50"/>
        <end position="70"/>
    </location>
</feature>
<feature type="transmembrane region" description="Helical" evidence="2">
    <location>
        <begin position="85"/>
        <end position="105"/>
    </location>
</feature>
<feature type="binding site" description="axial binding residue" evidence="1">
    <location>
        <position position="49"/>
    </location>
    <ligand>
        <name>heme a3</name>
        <dbReference type="ChEBI" id="CHEBI:83282"/>
    </ligand>
    <ligandPart>
        <name>Fe</name>
        <dbReference type="ChEBI" id="CHEBI:18248"/>
    </ligandPart>
</feature>
<feature type="binding site" description="axial binding residue" evidence="1">
    <location>
        <position position="51"/>
    </location>
    <ligand>
        <name>Fe(II)-heme a</name>
        <dbReference type="ChEBI" id="CHEBI:61715"/>
    </ligand>
    <ligandPart>
        <name>Fe</name>
        <dbReference type="ChEBI" id="CHEBI:18248"/>
    </ligandPart>
</feature>
<feature type="non-terminal residue">
    <location>
        <position position="1"/>
    </location>
</feature>
<feature type="non-terminal residue">
    <location>
        <position position="108"/>
    </location>
</feature>
<feature type="helix" evidence="4">
    <location>
        <begin position="9"/>
        <end position="31"/>
    </location>
</feature>
<feature type="helix" evidence="4">
    <location>
        <begin position="34"/>
        <end position="36"/>
    </location>
</feature>
<feature type="helix" evidence="4">
    <location>
        <begin position="37"/>
        <end position="40"/>
    </location>
</feature>
<feature type="helix" evidence="4">
    <location>
        <begin position="45"/>
        <end position="53"/>
    </location>
</feature>
<feature type="turn" evidence="4">
    <location>
        <begin position="54"/>
        <end position="56"/>
    </location>
</feature>
<feature type="helix" evidence="4">
    <location>
        <begin position="57"/>
        <end position="64"/>
    </location>
</feature>
<feature type="helix" evidence="4">
    <location>
        <begin position="66"/>
        <end position="74"/>
    </location>
</feature>
<feature type="helix" evidence="4">
    <location>
        <begin position="80"/>
        <end position="108"/>
    </location>
</feature>
<organism>
    <name type="scientific">Thermus thermophilus</name>
    <dbReference type="NCBI Taxonomy" id="274"/>
    <lineage>
        <taxon>Bacteria</taxon>
        <taxon>Thermotogati</taxon>
        <taxon>Deinococcota</taxon>
        <taxon>Deinococci</taxon>
        <taxon>Thermales</taxon>
        <taxon>Thermaceae</taxon>
        <taxon>Thermus</taxon>
    </lineage>
</organism>